<dbReference type="EC" id="4.3.1.24" evidence="2"/>
<dbReference type="EMBL" id="X78269">
    <property type="protein sequence ID" value="CAA55075.1"/>
    <property type="molecule type" value="mRNA"/>
</dbReference>
<dbReference type="PIR" id="T03663">
    <property type="entry name" value="T03663"/>
</dbReference>
<dbReference type="RefSeq" id="NP_001312473.1">
    <property type="nucleotide sequence ID" value="NM_001325544.1"/>
</dbReference>
<dbReference type="SMR" id="P45733"/>
<dbReference type="STRING" id="4097.P45733"/>
<dbReference type="PaxDb" id="4097-P45733"/>
<dbReference type="GeneID" id="107792668"/>
<dbReference type="KEGG" id="nta:107792668"/>
<dbReference type="OrthoDB" id="10051290at2759"/>
<dbReference type="BRENDA" id="4.3.1.24">
    <property type="organism ID" value="3645"/>
</dbReference>
<dbReference type="SABIO-RK" id="P45733"/>
<dbReference type="UniPathway" id="UPA00713">
    <property type="reaction ID" value="UER00725"/>
</dbReference>
<dbReference type="Proteomes" id="UP000084051">
    <property type="component" value="Unplaced"/>
</dbReference>
<dbReference type="GO" id="GO:0005737">
    <property type="term" value="C:cytoplasm"/>
    <property type="evidence" value="ECO:0007669"/>
    <property type="project" value="UniProtKB-SubCell"/>
</dbReference>
<dbReference type="GO" id="GO:0016841">
    <property type="term" value="F:ammonia-lyase activity"/>
    <property type="evidence" value="ECO:0000318"/>
    <property type="project" value="GO_Central"/>
</dbReference>
<dbReference type="GO" id="GO:0045548">
    <property type="term" value="F:phenylalanine ammonia-lyase activity"/>
    <property type="evidence" value="ECO:0007669"/>
    <property type="project" value="UniProtKB-EC"/>
</dbReference>
<dbReference type="GO" id="GO:0009800">
    <property type="term" value="P:cinnamic acid biosynthetic process"/>
    <property type="evidence" value="ECO:0007669"/>
    <property type="project" value="UniProtKB-UniPathway"/>
</dbReference>
<dbReference type="GO" id="GO:0006559">
    <property type="term" value="P:L-phenylalanine catabolic process"/>
    <property type="evidence" value="ECO:0007669"/>
    <property type="project" value="UniProtKB-KW"/>
</dbReference>
<dbReference type="CDD" id="cd00332">
    <property type="entry name" value="PAL-HAL"/>
    <property type="match status" value="1"/>
</dbReference>
<dbReference type="FunFam" id="1.10.274.20:FF:000001">
    <property type="entry name" value="Phenylalanine ammonia-lyase"/>
    <property type="match status" value="1"/>
</dbReference>
<dbReference type="FunFam" id="1.10.275.10:FF:000009">
    <property type="entry name" value="Phenylalanine ammonia-lyase"/>
    <property type="match status" value="1"/>
</dbReference>
<dbReference type="FunFam" id="1.20.200.10:FF:000009">
    <property type="entry name" value="Phenylalanine ammonia-lyase"/>
    <property type="match status" value="1"/>
</dbReference>
<dbReference type="Gene3D" id="1.20.200.10">
    <property type="entry name" value="Fumarase/aspartase (Central domain)"/>
    <property type="match status" value="1"/>
</dbReference>
<dbReference type="Gene3D" id="1.10.275.10">
    <property type="entry name" value="Fumarase/aspartase (N-terminal domain)"/>
    <property type="match status" value="1"/>
</dbReference>
<dbReference type="Gene3D" id="1.10.274.20">
    <property type="entry name" value="Phenylalanine ammonia-lyase 1, domain 3"/>
    <property type="match status" value="1"/>
</dbReference>
<dbReference type="InterPro" id="IPR001106">
    <property type="entry name" value="Aromatic_Lyase"/>
</dbReference>
<dbReference type="InterPro" id="IPR024083">
    <property type="entry name" value="Fumarase/histidase_N"/>
</dbReference>
<dbReference type="InterPro" id="IPR008948">
    <property type="entry name" value="L-Aspartase-like"/>
</dbReference>
<dbReference type="InterPro" id="IPR022313">
    <property type="entry name" value="Phe/His_NH3-lyase_AS"/>
</dbReference>
<dbReference type="InterPro" id="IPR005922">
    <property type="entry name" value="Phe_NH3-lyase"/>
</dbReference>
<dbReference type="InterPro" id="IPR023144">
    <property type="entry name" value="Phe_NH3-lyase_shielding_dom_sf"/>
</dbReference>
<dbReference type="NCBIfam" id="TIGR01226">
    <property type="entry name" value="phe_am_lyase"/>
    <property type="match status" value="1"/>
</dbReference>
<dbReference type="PANTHER" id="PTHR10362">
    <property type="entry name" value="HISTIDINE AMMONIA-LYASE"/>
    <property type="match status" value="1"/>
</dbReference>
<dbReference type="Pfam" id="PF00221">
    <property type="entry name" value="Lyase_aromatic"/>
    <property type="match status" value="1"/>
</dbReference>
<dbReference type="SUPFAM" id="SSF48557">
    <property type="entry name" value="L-aspartase-like"/>
    <property type="match status" value="1"/>
</dbReference>
<dbReference type="PROSITE" id="PS00488">
    <property type="entry name" value="PAL_HISTIDASE"/>
    <property type="match status" value="1"/>
</dbReference>
<proteinExistence type="evidence at transcript level"/>
<comment type="function">
    <text evidence="2">This is a key enzyme of plant metabolism catalyzing the first reaction in the biosynthesis from L-phenylalanine of a wide variety of natural products based on the phenylpropane skeleton.</text>
</comment>
<comment type="catalytic activity">
    <reaction evidence="2">
        <text>L-phenylalanine = (E)-cinnamate + NH4(+)</text>
        <dbReference type="Rhea" id="RHEA:21384"/>
        <dbReference type="ChEBI" id="CHEBI:15669"/>
        <dbReference type="ChEBI" id="CHEBI:28938"/>
        <dbReference type="ChEBI" id="CHEBI:58095"/>
        <dbReference type="EC" id="4.3.1.24"/>
    </reaction>
</comment>
<comment type="pathway">
    <text evidence="5">Phenylpropanoid metabolism; trans-cinnamate biosynthesis; trans-cinnamate from L-phenylalanine: step 1/1.</text>
</comment>
<comment type="subunit">
    <text evidence="2">Homotetramer.</text>
</comment>
<comment type="subcellular location">
    <subcellularLocation>
        <location evidence="5">Cytoplasm</location>
    </subcellularLocation>
</comment>
<comment type="induction">
    <text>Strongly induced during the hypersensitive reaction to TMV or to a fungal elicitor.</text>
</comment>
<comment type="PTM">
    <text evidence="3">Contains an active site 4-methylidene-imidazol-5-one (MIO), which is formed autocatalytically by cyclization and dehydration of residues Ala-Ser-Gly.</text>
</comment>
<comment type="similarity">
    <text evidence="5">Belongs to the PAL/histidase family.</text>
</comment>
<sequence length="712" mass="77510">MAGVAQNGHQEMDFCVKVDPLNWEMAADSLKGSHLDEVKKMVAEFRKPVVKLGGETLTVAQVAAIAAKDNAKTVKVELSEGARAGVKASSDWVMDSMSKGTDSYGVTTGFGATSHRRTKNGGALQKELIRFLNAGVFGNGTESCHTLPQSGTRAAMLVRINTLLQGYSGIRFEILEAITKLLNHNVTPCLPLRGTITASGDLVPLSYIAGLLTGRPNSKAIGPNGETLNAEEAFRVAGVNSGFFELQPKEGLALVNGTAVGSGLASMVLFDANILAVFSEVLSAIFAEVMNGKPEFTDHLTHKLKHHPGQIEAAAIMEHILDGSSYVKAPQKLHETDPLQKPKQDRYALRTSPQWLGPQIEVIRSATKMIEREINSVNDNPLIDVSRNKALHGGNFQGTPIGVSMDNARLALASIGKLMFAQFSELVNDYYNNGLPSNLTAGRNPSLDYGFKGSEIAMASYCSELQFLANPVTNHVQSAEQHNQDVNSLGLISARKTAEAVDILKLMSSTYLVALCQAIDLRHLEENLRNAVKNTVSQVAKRTLTMGANGELHPSRFCEKDLLRVVDREYVFRYADDACSANYPLMQKLRQVLVDHALENGENEKNANSSIFQKILAFEGELKAVLPKEVESARISLENGNPAIANRIKECRSYPLYRFVREELGAELLTGEKVRSPGEECDKVFTAMCNGQIIDSLLECLKEWNGAPLPIC</sequence>
<name>PAL3_TOBAC</name>
<accession>P45733</accession>
<feature type="chain" id="PRO_0000215425" description="Phenylalanine ammonia-lyase">
    <location>
        <begin position="1"/>
        <end position="712"/>
    </location>
</feature>
<feature type="active site" description="Proton donor/acceptor" evidence="3">
    <location>
        <position position="104"/>
    </location>
</feature>
<feature type="binding site" evidence="3">
    <location>
        <position position="256"/>
    </location>
    <ligand>
        <name>(E)-cinnamate</name>
        <dbReference type="ChEBI" id="CHEBI:15669"/>
    </ligand>
</feature>
<feature type="binding site" evidence="3">
    <location>
        <position position="344"/>
    </location>
    <ligand>
        <name>(E)-cinnamate</name>
        <dbReference type="ChEBI" id="CHEBI:15669"/>
    </ligand>
</feature>
<feature type="binding site" evidence="3">
    <location>
        <position position="350"/>
    </location>
    <ligand>
        <name>(E)-cinnamate</name>
        <dbReference type="ChEBI" id="CHEBI:15669"/>
    </ligand>
</feature>
<feature type="binding site" evidence="3">
    <location>
        <position position="380"/>
    </location>
    <ligand>
        <name>(E)-cinnamate</name>
        <dbReference type="ChEBI" id="CHEBI:15669"/>
    </ligand>
</feature>
<feature type="binding site" evidence="1">
    <location>
        <position position="452"/>
    </location>
    <ligand>
        <name>(E)-cinnamate</name>
        <dbReference type="ChEBI" id="CHEBI:15669"/>
    </ligand>
</feature>
<feature type="binding site" evidence="1">
    <location>
        <position position="480"/>
    </location>
    <ligand>
        <name>(E)-cinnamate</name>
        <dbReference type="ChEBI" id="CHEBI:15669"/>
    </ligand>
</feature>
<feature type="binding site" evidence="3">
    <location>
        <position position="483"/>
    </location>
    <ligand>
        <name>(E)-cinnamate</name>
        <dbReference type="ChEBI" id="CHEBI:15669"/>
    </ligand>
</feature>
<feature type="modified residue" description="2,3-didehydroalanine (Ser)" evidence="4">
    <location>
        <position position="199"/>
    </location>
</feature>
<feature type="cross-link" description="5-imidazolinone (Ala-Gly)" evidence="3">
    <location>
        <begin position="198"/>
        <end position="200"/>
    </location>
</feature>
<evidence type="ECO:0000250" key="1">
    <source>
        <dbReference type="UniProtKB" id="P11544"/>
    </source>
</evidence>
<evidence type="ECO:0000250" key="2">
    <source>
        <dbReference type="UniProtKB" id="P24481"/>
    </source>
</evidence>
<evidence type="ECO:0000250" key="3">
    <source>
        <dbReference type="UniProtKB" id="Q68G84"/>
    </source>
</evidence>
<evidence type="ECO:0000255" key="4">
    <source>
        <dbReference type="PROSITE-ProRule" id="PRU10122"/>
    </source>
</evidence>
<evidence type="ECO:0000305" key="5"/>
<organism>
    <name type="scientific">Nicotiana tabacum</name>
    <name type="common">Common tobacco</name>
    <dbReference type="NCBI Taxonomy" id="4097"/>
    <lineage>
        <taxon>Eukaryota</taxon>
        <taxon>Viridiplantae</taxon>
        <taxon>Streptophyta</taxon>
        <taxon>Embryophyta</taxon>
        <taxon>Tracheophyta</taxon>
        <taxon>Spermatophyta</taxon>
        <taxon>Magnoliopsida</taxon>
        <taxon>eudicotyledons</taxon>
        <taxon>Gunneridae</taxon>
        <taxon>Pentapetalae</taxon>
        <taxon>asterids</taxon>
        <taxon>lamiids</taxon>
        <taxon>Solanales</taxon>
        <taxon>Solanaceae</taxon>
        <taxon>Nicotianoideae</taxon>
        <taxon>Nicotianeae</taxon>
        <taxon>Nicotiana</taxon>
    </lineage>
</organism>
<protein>
    <recommendedName>
        <fullName>Phenylalanine ammonia-lyase</fullName>
        <ecNumber evidence="2">4.3.1.24</ecNumber>
    </recommendedName>
</protein>
<reference key="1">
    <citation type="journal article" date="1994" name="Plant Physiol.">
        <title>Phenylalanine ammonia-lyase in tobacco. Molecular cloning and gene expression during the hypersensitive reaction to tobacco mosaic virus and the response to a fungal elicitor.</title>
        <authorList>
            <person name="Pellegrini L."/>
            <person name="Rohfritsch O."/>
            <person name="Fritig B."/>
            <person name="Legrand M."/>
        </authorList>
    </citation>
    <scope>NUCLEOTIDE SEQUENCE [MRNA]</scope>
    <source>
        <strain>cv. Samsun NN</strain>
        <tissue>Leaf</tissue>
    </source>
</reference>
<keyword id="KW-0963">Cytoplasm</keyword>
<keyword id="KW-0456">Lyase</keyword>
<keyword id="KW-0585">Phenylalanine catabolism</keyword>
<keyword id="KW-0587">Phenylpropanoid metabolism</keyword>
<keyword id="KW-1185">Reference proteome</keyword>